<feature type="chain" id="PRO_1000073719" description="Aspartate carbamoyltransferase catalytic subunit">
    <location>
        <begin position="1"/>
        <end position="304"/>
    </location>
</feature>
<feature type="binding site" evidence="1">
    <location>
        <position position="49"/>
    </location>
    <ligand>
        <name>carbamoyl phosphate</name>
        <dbReference type="ChEBI" id="CHEBI:58228"/>
    </ligand>
</feature>
<feature type="binding site" evidence="1">
    <location>
        <position position="50"/>
    </location>
    <ligand>
        <name>carbamoyl phosphate</name>
        <dbReference type="ChEBI" id="CHEBI:58228"/>
    </ligand>
</feature>
<feature type="binding site" evidence="1">
    <location>
        <position position="77"/>
    </location>
    <ligand>
        <name>L-aspartate</name>
        <dbReference type="ChEBI" id="CHEBI:29991"/>
    </ligand>
</feature>
<feature type="binding site" evidence="1">
    <location>
        <position position="99"/>
    </location>
    <ligand>
        <name>carbamoyl phosphate</name>
        <dbReference type="ChEBI" id="CHEBI:58228"/>
    </ligand>
</feature>
<feature type="binding site" evidence="1">
    <location>
        <position position="127"/>
    </location>
    <ligand>
        <name>carbamoyl phosphate</name>
        <dbReference type="ChEBI" id="CHEBI:58228"/>
    </ligand>
</feature>
<feature type="binding site" evidence="1">
    <location>
        <position position="130"/>
    </location>
    <ligand>
        <name>carbamoyl phosphate</name>
        <dbReference type="ChEBI" id="CHEBI:58228"/>
    </ligand>
</feature>
<feature type="binding site" evidence="1">
    <location>
        <position position="160"/>
    </location>
    <ligand>
        <name>L-aspartate</name>
        <dbReference type="ChEBI" id="CHEBI:29991"/>
    </ligand>
</feature>
<feature type="binding site" evidence="1">
    <location>
        <position position="211"/>
    </location>
    <ligand>
        <name>L-aspartate</name>
        <dbReference type="ChEBI" id="CHEBI:29991"/>
    </ligand>
</feature>
<feature type="binding site" evidence="1">
    <location>
        <position position="252"/>
    </location>
    <ligand>
        <name>carbamoyl phosphate</name>
        <dbReference type="ChEBI" id="CHEBI:58228"/>
    </ligand>
</feature>
<feature type="binding site" evidence="1">
    <location>
        <position position="253"/>
    </location>
    <ligand>
        <name>carbamoyl phosphate</name>
        <dbReference type="ChEBI" id="CHEBI:58228"/>
    </ligand>
</feature>
<name>PYRB_BACCN</name>
<gene>
    <name evidence="1" type="primary">pyrB</name>
    <name type="ordered locus">Bcer98_2538</name>
</gene>
<organism>
    <name type="scientific">Bacillus cytotoxicus (strain DSM 22905 / CIP 110041 / 391-98 / NVH 391-98)</name>
    <dbReference type="NCBI Taxonomy" id="315749"/>
    <lineage>
        <taxon>Bacteria</taxon>
        <taxon>Bacillati</taxon>
        <taxon>Bacillota</taxon>
        <taxon>Bacilli</taxon>
        <taxon>Bacillales</taxon>
        <taxon>Bacillaceae</taxon>
        <taxon>Bacillus</taxon>
        <taxon>Bacillus cereus group</taxon>
    </lineage>
</organism>
<sequence length="304" mass="34831">MSQLLTMSELSKEEISEILKDAEDFANGKERKATEQTFVANLFFENSTRTRFSFEVAEKRLGLEVLNFSADSSSVQKGETLYDTIRTLESIGAKAVVIRHQQDRYFDELKDKVNIPILNAGDGCGNHPTQCLLDLLTIKQEFGRFEGLKIAIVGDIRHSRVARSNAEALTKLGATIYFASPEEWKDETNTFGTYRSLDELIPEVDVMMLLRVQHERHDHYETDIMKEYHENHGLTMEREERMKEGSIIMHPAPVNRDVEIASELVECKRSRIFKQMENGVYVRMAVLKRALPNVLGGMKHELFV</sequence>
<keyword id="KW-0665">Pyrimidine biosynthesis</keyword>
<keyword id="KW-0808">Transferase</keyword>
<reference key="1">
    <citation type="journal article" date="2008" name="Chem. Biol. Interact.">
        <title>Extending the Bacillus cereus group genomics to putative food-borne pathogens of different toxicity.</title>
        <authorList>
            <person name="Lapidus A."/>
            <person name="Goltsman E."/>
            <person name="Auger S."/>
            <person name="Galleron N."/>
            <person name="Segurens B."/>
            <person name="Dossat C."/>
            <person name="Land M.L."/>
            <person name="Broussolle V."/>
            <person name="Brillard J."/>
            <person name="Guinebretiere M.-H."/>
            <person name="Sanchis V."/>
            <person name="Nguen-the C."/>
            <person name="Lereclus D."/>
            <person name="Richardson P."/>
            <person name="Wincker P."/>
            <person name="Weissenbach J."/>
            <person name="Ehrlich S.D."/>
            <person name="Sorokin A."/>
        </authorList>
    </citation>
    <scope>NUCLEOTIDE SEQUENCE [LARGE SCALE GENOMIC DNA]</scope>
    <source>
        <strain>DSM 22905 / CIP 110041 / 391-98 / NVH 391-98</strain>
    </source>
</reference>
<proteinExistence type="inferred from homology"/>
<dbReference type="EC" id="2.1.3.2" evidence="1"/>
<dbReference type="EMBL" id="CP000764">
    <property type="protein sequence ID" value="ABS22772.1"/>
    <property type="molecule type" value="Genomic_DNA"/>
</dbReference>
<dbReference type="RefSeq" id="WP_012094979.1">
    <property type="nucleotide sequence ID" value="NC_009674.1"/>
</dbReference>
<dbReference type="SMR" id="A7GRL4"/>
<dbReference type="STRING" id="315749.Bcer98_2538"/>
<dbReference type="GeneID" id="33897792"/>
<dbReference type="KEGG" id="bcy:Bcer98_2538"/>
<dbReference type="eggNOG" id="COG0540">
    <property type="taxonomic scope" value="Bacteria"/>
</dbReference>
<dbReference type="HOGENOM" id="CLU_043846_2_1_9"/>
<dbReference type="OrthoDB" id="9774690at2"/>
<dbReference type="UniPathway" id="UPA00070">
    <property type="reaction ID" value="UER00116"/>
</dbReference>
<dbReference type="Proteomes" id="UP000002300">
    <property type="component" value="Chromosome"/>
</dbReference>
<dbReference type="GO" id="GO:0005829">
    <property type="term" value="C:cytosol"/>
    <property type="evidence" value="ECO:0007669"/>
    <property type="project" value="TreeGrafter"/>
</dbReference>
<dbReference type="GO" id="GO:0016597">
    <property type="term" value="F:amino acid binding"/>
    <property type="evidence" value="ECO:0007669"/>
    <property type="project" value="InterPro"/>
</dbReference>
<dbReference type="GO" id="GO:0004070">
    <property type="term" value="F:aspartate carbamoyltransferase activity"/>
    <property type="evidence" value="ECO:0007669"/>
    <property type="project" value="UniProtKB-UniRule"/>
</dbReference>
<dbReference type="GO" id="GO:0006207">
    <property type="term" value="P:'de novo' pyrimidine nucleobase biosynthetic process"/>
    <property type="evidence" value="ECO:0007669"/>
    <property type="project" value="InterPro"/>
</dbReference>
<dbReference type="GO" id="GO:0044205">
    <property type="term" value="P:'de novo' UMP biosynthetic process"/>
    <property type="evidence" value="ECO:0007669"/>
    <property type="project" value="UniProtKB-UniRule"/>
</dbReference>
<dbReference type="GO" id="GO:0006520">
    <property type="term" value="P:amino acid metabolic process"/>
    <property type="evidence" value="ECO:0007669"/>
    <property type="project" value="InterPro"/>
</dbReference>
<dbReference type="FunFam" id="3.40.50.1370:FF:000001">
    <property type="entry name" value="Aspartate carbamoyltransferase"/>
    <property type="match status" value="1"/>
</dbReference>
<dbReference type="FunFam" id="3.40.50.1370:FF:000011">
    <property type="entry name" value="Aspartate carbamoyltransferase"/>
    <property type="match status" value="1"/>
</dbReference>
<dbReference type="Gene3D" id="3.40.50.1370">
    <property type="entry name" value="Aspartate/ornithine carbamoyltransferase"/>
    <property type="match status" value="2"/>
</dbReference>
<dbReference type="HAMAP" id="MF_00001">
    <property type="entry name" value="Asp_carb_tr"/>
    <property type="match status" value="1"/>
</dbReference>
<dbReference type="InterPro" id="IPR006132">
    <property type="entry name" value="Asp/Orn_carbamoyltranf_P-bd"/>
</dbReference>
<dbReference type="InterPro" id="IPR006130">
    <property type="entry name" value="Asp/Orn_carbamoylTrfase"/>
</dbReference>
<dbReference type="InterPro" id="IPR036901">
    <property type="entry name" value="Asp/Orn_carbamoylTrfase_sf"/>
</dbReference>
<dbReference type="InterPro" id="IPR002082">
    <property type="entry name" value="Asp_carbamoyltransf"/>
</dbReference>
<dbReference type="InterPro" id="IPR006131">
    <property type="entry name" value="Asp_carbamoyltransf_Asp/Orn-bd"/>
</dbReference>
<dbReference type="NCBIfam" id="TIGR00670">
    <property type="entry name" value="asp_carb_tr"/>
    <property type="match status" value="1"/>
</dbReference>
<dbReference type="NCBIfam" id="NF002032">
    <property type="entry name" value="PRK00856.1"/>
    <property type="match status" value="1"/>
</dbReference>
<dbReference type="PANTHER" id="PTHR45753:SF6">
    <property type="entry name" value="ASPARTATE CARBAMOYLTRANSFERASE"/>
    <property type="match status" value="1"/>
</dbReference>
<dbReference type="PANTHER" id="PTHR45753">
    <property type="entry name" value="ORNITHINE CARBAMOYLTRANSFERASE, MITOCHONDRIAL"/>
    <property type="match status" value="1"/>
</dbReference>
<dbReference type="Pfam" id="PF00185">
    <property type="entry name" value="OTCace"/>
    <property type="match status" value="1"/>
</dbReference>
<dbReference type="Pfam" id="PF02729">
    <property type="entry name" value="OTCace_N"/>
    <property type="match status" value="1"/>
</dbReference>
<dbReference type="PRINTS" id="PR00100">
    <property type="entry name" value="AOTCASE"/>
</dbReference>
<dbReference type="PRINTS" id="PR00101">
    <property type="entry name" value="ATCASE"/>
</dbReference>
<dbReference type="SUPFAM" id="SSF53671">
    <property type="entry name" value="Aspartate/ornithine carbamoyltransferase"/>
    <property type="match status" value="1"/>
</dbReference>
<dbReference type="PROSITE" id="PS00097">
    <property type="entry name" value="CARBAMOYLTRANSFERASE"/>
    <property type="match status" value="1"/>
</dbReference>
<evidence type="ECO:0000255" key="1">
    <source>
        <dbReference type="HAMAP-Rule" id="MF_00001"/>
    </source>
</evidence>
<comment type="function">
    <text evidence="1">Catalyzes the condensation of carbamoyl phosphate and aspartate to form carbamoyl aspartate and inorganic phosphate, the committed step in the de novo pyrimidine nucleotide biosynthesis pathway.</text>
</comment>
<comment type="catalytic activity">
    <reaction evidence="1">
        <text>carbamoyl phosphate + L-aspartate = N-carbamoyl-L-aspartate + phosphate + H(+)</text>
        <dbReference type="Rhea" id="RHEA:20013"/>
        <dbReference type="ChEBI" id="CHEBI:15378"/>
        <dbReference type="ChEBI" id="CHEBI:29991"/>
        <dbReference type="ChEBI" id="CHEBI:32814"/>
        <dbReference type="ChEBI" id="CHEBI:43474"/>
        <dbReference type="ChEBI" id="CHEBI:58228"/>
        <dbReference type="EC" id="2.1.3.2"/>
    </reaction>
</comment>
<comment type="pathway">
    <text evidence="1">Pyrimidine metabolism; UMP biosynthesis via de novo pathway; (S)-dihydroorotate from bicarbonate: step 2/3.</text>
</comment>
<comment type="subunit">
    <text evidence="1">Heterododecamer (2C3:3R2) of six catalytic PyrB chains organized as two trimers (C3), and six regulatory PyrI chains organized as three dimers (R2).</text>
</comment>
<comment type="similarity">
    <text evidence="1">Belongs to the aspartate/ornithine carbamoyltransferase superfamily. ATCase family.</text>
</comment>
<accession>A7GRL4</accession>
<protein>
    <recommendedName>
        <fullName evidence="1">Aspartate carbamoyltransferase catalytic subunit</fullName>
        <ecNumber evidence="1">2.1.3.2</ecNumber>
    </recommendedName>
    <alternativeName>
        <fullName evidence="1">Aspartate transcarbamylase</fullName>
        <shortName evidence="1">ATCase</shortName>
    </alternativeName>
</protein>